<evidence type="ECO:0000255" key="1"/>
<evidence type="ECO:0000255" key="2">
    <source>
        <dbReference type="PROSITE-ProRule" id="PRU00239"/>
    </source>
</evidence>
<evidence type="ECO:0000255" key="3">
    <source>
        <dbReference type="PROSITE-ProRule" id="PRU00448"/>
    </source>
</evidence>
<evidence type="ECO:0000269" key="4">
    <source>
    </source>
</evidence>
<evidence type="ECO:0000269" key="5">
    <source>
    </source>
</evidence>
<evidence type="ECO:0000269" key="6">
    <source>
    </source>
</evidence>
<evidence type="ECO:0000305" key="7"/>
<evidence type="ECO:0000312" key="8">
    <source>
        <dbReference type="EMBL" id="AAF48591.2"/>
    </source>
</evidence>
<evidence type="ECO:0000312" key="9">
    <source>
        <dbReference type="EMBL" id="AAL29115.1"/>
    </source>
</evidence>
<evidence type="ECO:0000312" key="10">
    <source>
        <dbReference type="EMBL" id="CAD61271.1"/>
    </source>
</evidence>
<accession>Q9VXH6</accession>
<accession>Q86NA1</accession>
<accession>Q95R89</accession>
<organism>
    <name type="scientific">Drosophila melanogaster</name>
    <name type="common">Fruit fly</name>
    <dbReference type="NCBI Taxonomy" id="7227"/>
    <lineage>
        <taxon>Eukaryota</taxon>
        <taxon>Metazoa</taxon>
        <taxon>Ecdysozoa</taxon>
        <taxon>Arthropoda</taxon>
        <taxon>Hexapoda</taxon>
        <taxon>Insecta</taxon>
        <taxon>Pterygota</taxon>
        <taxon>Neoptera</taxon>
        <taxon>Endopterygota</taxon>
        <taxon>Diptera</taxon>
        <taxon>Brachycera</taxon>
        <taxon>Muscomorpha</taxon>
        <taxon>Ephydroidea</taxon>
        <taxon>Drosophilidae</taxon>
        <taxon>Drosophila</taxon>
        <taxon>Sophophora</taxon>
    </lineage>
</organism>
<proteinExistence type="evidence at protein level"/>
<comment type="function">
    <text>Not known; does not seem to have protease activity.</text>
</comment>
<comment type="subcellular location">
    <subcellularLocation>
        <location evidence="6">Cytoplasm</location>
    </subcellularLocation>
</comment>
<comment type="tissue specificity">
    <text evidence="6">Localized to the salivary glands in the larva.</text>
</comment>
<comment type="developmental stage">
    <text evidence="6">Expressed throughout development, with expression highest in the pupa.</text>
</comment>
<comment type="miscellaneous">
    <text>Although strongly related to peptidase C2 proteins, it lack the essential Cys, His and Asn residues of the catalytic triad at positions 84, 242 and 267, respectively.</text>
</comment>
<comment type="similarity">
    <text evidence="1">Belongs to the peptidase C2 family.</text>
</comment>
<protein>
    <recommendedName>
        <fullName>Calpain-C</fullName>
    </recommendedName>
    <alternativeName>
        <fullName>Calcium-activated neutral proteinase homolog C</fullName>
        <shortName>CANP C</shortName>
    </alternativeName>
</protein>
<feature type="chain" id="PRO_0000207732" description="Calpain-C">
    <location>
        <begin position="1"/>
        <end position="681"/>
    </location>
</feature>
<feature type="domain" description="Calpain catalytic" evidence="2">
    <location>
        <begin position="18"/>
        <end position="331"/>
    </location>
</feature>
<feature type="domain" description="EF-hand" evidence="3">
    <location>
        <begin position="552"/>
        <end position="587"/>
    </location>
</feature>
<feature type="region of interest" description="Domain III">
    <location>
        <begin position="332"/>
        <end position="481"/>
    </location>
</feature>
<feature type="region of interest" description="Linker">
    <location>
        <begin position="482"/>
        <end position="514"/>
    </location>
</feature>
<feature type="region of interest" description="Domain IV">
    <location>
        <begin position="515"/>
        <end position="681"/>
    </location>
</feature>
<feature type="binding site" evidence="7">
    <location>
        <position position="565"/>
    </location>
    <ligand>
        <name>Ca(2+)</name>
        <dbReference type="ChEBI" id="CHEBI:29108"/>
    </ligand>
</feature>
<feature type="binding site" evidence="7">
    <location>
        <position position="567"/>
    </location>
    <ligand>
        <name>Ca(2+)</name>
        <dbReference type="ChEBI" id="CHEBI:29108"/>
    </ligand>
</feature>
<feature type="binding site" evidence="7">
    <location>
        <position position="569"/>
    </location>
    <ligand>
        <name>Ca(2+)</name>
        <dbReference type="ChEBI" id="CHEBI:29108"/>
    </ligand>
</feature>
<feature type="binding site" evidence="7">
    <location>
        <position position="571"/>
    </location>
    <ligand>
        <name>Ca(2+)</name>
        <dbReference type="ChEBI" id="CHEBI:29108"/>
    </ligand>
</feature>
<feature type="sequence conflict" description="In Ref. 1; CAD61271 and 4; AAL29115." evidence="7" ref="1 4">
    <original>S</original>
    <variation>T</variation>
    <location>
        <position position="71"/>
    </location>
</feature>
<feature type="sequence conflict" description="In Ref. 1; CAD61271 and 4; AAL29115." evidence="7" ref="1 4">
    <original>S</original>
    <variation>A</variation>
    <location>
        <position position="197"/>
    </location>
</feature>
<feature type="sequence conflict" description="In Ref. 4; AAL29115." evidence="7" ref="4">
    <original>N</original>
    <variation>Y</variation>
    <location>
        <position position="241"/>
    </location>
</feature>
<feature type="sequence conflict" description="In Ref. 4; AAL29115." evidence="7" ref="4">
    <original>M</original>
    <variation>T</variation>
    <location>
        <position position="623"/>
    </location>
</feature>
<reference evidence="7 10" key="1">
    <citation type="journal article" date="2003" name="Biochem. Biophys. Res. Commun.">
        <title>Molecular cloning and RNA expression of a novel Drosophila calpain, Calpain C.</title>
        <authorList>
            <person name="Spadoni C."/>
            <person name="Farkas A."/>
            <person name="Sinka R."/>
            <person name="Tompa P."/>
            <person name="Friedrich P."/>
        </authorList>
    </citation>
    <scope>NUCLEOTIDE SEQUENCE [MRNA]</scope>
    <scope>LACK OF CATALYTIC ACTIVITY</scope>
    <scope>SUBCELLULAR LOCATION</scope>
    <scope>TISSUE SPECIFICITY</scope>
    <scope>DEVELOPMENTAL STAGE</scope>
</reference>
<reference evidence="8" key="2">
    <citation type="journal article" date="2000" name="Science">
        <title>The genome sequence of Drosophila melanogaster.</title>
        <authorList>
            <person name="Adams M.D."/>
            <person name="Celniker S.E."/>
            <person name="Holt R.A."/>
            <person name="Evans C.A."/>
            <person name="Gocayne J.D."/>
            <person name="Amanatides P.G."/>
            <person name="Scherer S.E."/>
            <person name="Li P.W."/>
            <person name="Hoskins R.A."/>
            <person name="Galle R.F."/>
            <person name="George R.A."/>
            <person name="Lewis S.E."/>
            <person name="Richards S."/>
            <person name="Ashburner M."/>
            <person name="Henderson S.N."/>
            <person name="Sutton G.G."/>
            <person name="Wortman J.R."/>
            <person name="Yandell M.D."/>
            <person name="Zhang Q."/>
            <person name="Chen L.X."/>
            <person name="Brandon R.C."/>
            <person name="Rogers Y.-H.C."/>
            <person name="Blazej R.G."/>
            <person name="Champe M."/>
            <person name="Pfeiffer B.D."/>
            <person name="Wan K.H."/>
            <person name="Doyle C."/>
            <person name="Baxter E.G."/>
            <person name="Helt G."/>
            <person name="Nelson C.R."/>
            <person name="Miklos G.L.G."/>
            <person name="Abril J.F."/>
            <person name="Agbayani A."/>
            <person name="An H.-J."/>
            <person name="Andrews-Pfannkoch C."/>
            <person name="Baldwin D."/>
            <person name="Ballew R.M."/>
            <person name="Basu A."/>
            <person name="Baxendale J."/>
            <person name="Bayraktaroglu L."/>
            <person name="Beasley E.M."/>
            <person name="Beeson K.Y."/>
            <person name="Benos P.V."/>
            <person name="Berman B.P."/>
            <person name="Bhandari D."/>
            <person name="Bolshakov S."/>
            <person name="Borkova D."/>
            <person name="Botchan M.R."/>
            <person name="Bouck J."/>
            <person name="Brokstein P."/>
            <person name="Brottier P."/>
            <person name="Burtis K.C."/>
            <person name="Busam D.A."/>
            <person name="Butler H."/>
            <person name="Cadieu E."/>
            <person name="Center A."/>
            <person name="Chandra I."/>
            <person name="Cherry J.M."/>
            <person name="Cawley S."/>
            <person name="Dahlke C."/>
            <person name="Davenport L.B."/>
            <person name="Davies P."/>
            <person name="de Pablos B."/>
            <person name="Delcher A."/>
            <person name="Deng Z."/>
            <person name="Mays A.D."/>
            <person name="Dew I."/>
            <person name="Dietz S.M."/>
            <person name="Dodson K."/>
            <person name="Doup L.E."/>
            <person name="Downes M."/>
            <person name="Dugan-Rocha S."/>
            <person name="Dunkov B.C."/>
            <person name="Dunn P."/>
            <person name="Durbin K.J."/>
            <person name="Evangelista C.C."/>
            <person name="Ferraz C."/>
            <person name="Ferriera S."/>
            <person name="Fleischmann W."/>
            <person name="Fosler C."/>
            <person name="Gabrielian A.E."/>
            <person name="Garg N.S."/>
            <person name="Gelbart W.M."/>
            <person name="Glasser K."/>
            <person name="Glodek A."/>
            <person name="Gong F."/>
            <person name="Gorrell J.H."/>
            <person name="Gu Z."/>
            <person name="Guan P."/>
            <person name="Harris M."/>
            <person name="Harris N.L."/>
            <person name="Harvey D.A."/>
            <person name="Heiman T.J."/>
            <person name="Hernandez J.R."/>
            <person name="Houck J."/>
            <person name="Hostin D."/>
            <person name="Houston K.A."/>
            <person name="Howland T.J."/>
            <person name="Wei M.-H."/>
            <person name="Ibegwam C."/>
            <person name="Jalali M."/>
            <person name="Kalush F."/>
            <person name="Karpen G.H."/>
            <person name="Ke Z."/>
            <person name="Kennison J.A."/>
            <person name="Ketchum K.A."/>
            <person name="Kimmel B.E."/>
            <person name="Kodira C.D."/>
            <person name="Kraft C.L."/>
            <person name="Kravitz S."/>
            <person name="Kulp D."/>
            <person name="Lai Z."/>
            <person name="Lasko P."/>
            <person name="Lei Y."/>
            <person name="Levitsky A.A."/>
            <person name="Li J.H."/>
            <person name="Li Z."/>
            <person name="Liang Y."/>
            <person name="Lin X."/>
            <person name="Liu X."/>
            <person name="Mattei B."/>
            <person name="McIntosh T.C."/>
            <person name="McLeod M.P."/>
            <person name="McPherson D."/>
            <person name="Merkulov G."/>
            <person name="Milshina N.V."/>
            <person name="Mobarry C."/>
            <person name="Morris J."/>
            <person name="Moshrefi A."/>
            <person name="Mount S.M."/>
            <person name="Moy M."/>
            <person name="Murphy B."/>
            <person name="Murphy L."/>
            <person name="Muzny D.M."/>
            <person name="Nelson D.L."/>
            <person name="Nelson D.R."/>
            <person name="Nelson K.A."/>
            <person name="Nixon K."/>
            <person name="Nusskern D.R."/>
            <person name="Pacleb J.M."/>
            <person name="Palazzolo M."/>
            <person name="Pittman G.S."/>
            <person name="Pan S."/>
            <person name="Pollard J."/>
            <person name="Puri V."/>
            <person name="Reese M.G."/>
            <person name="Reinert K."/>
            <person name="Remington K."/>
            <person name="Saunders R.D.C."/>
            <person name="Scheeler F."/>
            <person name="Shen H."/>
            <person name="Shue B.C."/>
            <person name="Siden-Kiamos I."/>
            <person name="Simpson M."/>
            <person name="Skupski M.P."/>
            <person name="Smith T.J."/>
            <person name="Spier E."/>
            <person name="Spradling A.C."/>
            <person name="Stapleton M."/>
            <person name="Strong R."/>
            <person name="Sun E."/>
            <person name="Svirskas R."/>
            <person name="Tector C."/>
            <person name="Turner R."/>
            <person name="Venter E."/>
            <person name="Wang A.H."/>
            <person name="Wang X."/>
            <person name="Wang Z.-Y."/>
            <person name="Wassarman D.A."/>
            <person name="Weinstock G.M."/>
            <person name="Weissenbach J."/>
            <person name="Williams S.M."/>
            <person name="Woodage T."/>
            <person name="Worley K.C."/>
            <person name="Wu D."/>
            <person name="Yang S."/>
            <person name="Yao Q.A."/>
            <person name="Ye J."/>
            <person name="Yeh R.-F."/>
            <person name="Zaveri J.S."/>
            <person name="Zhan M."/>
            <person name="Zhang G."/>
            <person name="Zhao Q."/>
            <person name="Zheng L."/>
            <person name="Zheng X.H."/>
            <person name="Zhong F.N."/>
            <person name="Zhong W."/>
            <person name="Zhou X."/>
            <person name="Zhu S.C."/>
            <person name="Zhu X."/>
            <person name="Smith H.O."/>
            <person name="Gibbs R.A."/>
            <person name="Myers E.W."/>
            <person name="Rubin G.M."/>
            <person name="Venter J.C."/>
        </authorList>
    </citation>
    <scope>NUCLEOTIDE SEQUENCE [LARGE SCALE GENOMIC DNA]</scope>
    <source>
        <strain evidence="4">Berkeley</strain>
    </source>
</reference>
<reference evidence="7 8" key="3">
    <citation type="journal article" date="2002" name="Genome Biol.">
        <title>Annotation of the Drosophila melanogaster euchromatic genome: a systematic review.</title>
        <authorList>
            <person name="Misra S."/>
            <person name="Crosby M.A."/>
            <person name="Mungall C.J."/>
            <person name="Matthews B.B."/>
            <person name="Campbell K.S."/>
            <person name="Hradecky P."/>
            <person name="Huang Y."/>
            <person name="Kaminker J.S."/>
            <person name="Millburn G.H."/>
            <person name="Prochnik S.E."/>
            <person name="Smith C.D."/>
            <person name="Tupy J.L."/>
            <person name="Whitfield E.J."/>
            <person name="Bayraktaroglu L."/>
            <person name="Berman B.P."/>
            <person name="Bettencourt B.R."/>
            <person name="Celniker S.E."/>
            <person name="de Grey A.D.N.J."/>
            <person name="Drysdale R.A."/>
            <person name="Harris N.L."/>
            <person name="Richter J."/>
            <person name="Russo S."/>
            <person name="Schroeder A.J."/>
            <person name="Shu S.Q."/>
            <person name="Stapleton M."/>
            <person name="Yamada C."/>
            <person name="Ashburner M."/>
            <person name="Gelbart W.M."/>
            <person name="Rubin G.M."/>
            <person name="Lewis S.E."/>
        </authorList>
    </citation>
    <scope>GENOME REANNOTATION</scope>
    <source>
        <strain>Berkeley</strain>
    </source>
</reference>
<reference evidence="7 9" key="4">
    <citation type="journal article" date="2002" name="Genome Biol.">
        <title>A Drosophila full-length cDNA resource.</title>
        <authorList>
            <person name="Stapleton M."/>
            <person name="Carlson J.W."/>
            <person name="Brokstein P."/>
            <person name="Yu C."/>
            <person name="Champe M."/>
            <person name="George R.A."/>
            <person name="Guarin H."/>
            <person name="Kronmiller B."/>
            <person name="Pacleb J.M."/>
            <person name="Park S."/>
            <person name="Wan K.H."/>
            <person name="Rubin G.M."/>
            <person name="Celniker S.E."/>
        </authorList>
    </citation>
    <scope>NUCLEOTIDE SEQUENCE [LARGE SCALE MRNA]</scope>
    <source>
        <strain evidence="5">Berkeley</strain>
        <tissue evidence="5">Embryo</tissue>
    </source>
</reference>
<keyword id="KW-0106">Calcium</keyword>
<keyword id="KW-0963">Cytoplasm</keyword>
<keyword id="KW-0479">Metal-binding</keyword>
<keyword id="KW-1185">Reference proteome</keyword>
<name>CANC_DROME</name>
<gene>
    <name evidence="8" type="primary">CalpC</name>
    <name type="ORF">CG3692</name>
</gene>
<sequence length="681" mass="77448">MASKYERILSDCRSKNVLWEDPDFPAVQSSVFYYQTPPFTFQWKRIMDLADSGSGAVAANSSAAPVFLNESAEFDVVPGKMGDRWLVSCLGLLSSLRNLFYRVVPADQTLASAHGVFRFRLWWCGEWVEVLVDDRLPTINGRLAFMQPQASNCFWAALLEKAIAKLHGSYEALKYGTRSDGLTDLLGGVVRQMPILSDNIRPQTLKELLTTTCIVTCLADKSATVAKKNLAERMPNGILVNVNYRLSSLDKVKTLMGDSVQLVCLKDTFSSKPFGEKTHFLGDWSPMSKTWERVSQVERARLIRQLGPGEFWLSFCDFVEIFSTMEVVYLDTETSNDEEMLKSRPLHWKMKMHQGQWKRGVTAGGCRNHESFHINPQLLISVQDEQDLVIALNQHTAVEPKVIGFTMYTWDGEYMLSECLQKDFFKNHVSYLNSDYGNTRHVSYHTHLEAGHYVLIPTTYEPAEEAHFTVRILGTGSFRLSCLETQTMILLDPFPALKSTDAERCGGPKVKSVCQYEPVYMQLADENKTINCFELHELLEACLPNDYIKGCANIDICRQVIALQDRSGSGRITFQQFKTFMVNLKSWQGVFKMYTKEKAGILRAERLRDALCDIGFQLSTDIMNCLIQRYIRKDGTLRLSDFVSAVIHLTTAFNQFHLKNYGQVNVIEVHLHDWIKSILSC</sequence>
<dbReference type="EMBL" id="AJ538040">
    <property type="protein sequence ID" value="CAD61271.1"/>
    <property type="molecule type" value="mRNA"/>
</dbReference>
<dbReference type="EMBL" id="AE014298">
    <property type="protein sequence ID" value="AAF48591.2"/>
    <property type="molecule type" value="Genomic_DNA"/>
</dbReference>
<dbReference type="EMBL" id="AY061567">
    <property type="protein sequence ID" value="AAL29115.1"/>
    <property type="molecule type" value="mRNA"/>
</dbReference>
<dbReference type="RefSeq" id="NP_573118.2">
    <property type="nucleotide sequence ID" value="NM_132890.3"/>
</dbReference>
<dbReference type="SMR" id="Q9VXH6"/>
<dbReference type="BioGRID" id="58937">
    <property type="interactions" value="3"/>
</dbReference>
<dbReference type="FunCoup" id="Q9VXH6">
    <property type="interactions" value="30"/>
</dbReference>
<dbReference type="IntAct" id="Q9VXH6">
    <property type="interactions" value="4"/>
</dbReference>
<dbReference type="MINT" id="Q9VXH6"/>
<dbReference type="STRING" id="7227.FBpp0074005"/>
<dbReference type="PaxDb" id="7227-FBpp0074005"/>
<dbReference type="EnsemblMetazoa" id="FBtr0074226">
    <property type="protein sequence ID" value="FBpp0074005"/>
    <property type="gene ID" value="FBgn0260450"/>
</dbReference>
<dbReference type="GeneID" id="32597"/>
<dbReference type="KEGG" id="dme:Dmel_CG3692"/>
<dbReference type="AGR" id="FB:FBgn0260450"/>
<dbReference type="CTD" id="32597"/>
<dbReference type="FlyBase" id="FBgn0260450">
    <property type="gene designation" value="CalpC"/>
</dbReference>
<dbReference type="VEuPathDB" id="VectorBase:FBgn0260450"/>
<dbReference type="eggNOG" id="KOG0045">
    <property type="taxonomic scope" value="Eukaryota"/>
</dbReference>
<dbReference type="HOGENOM" id="CLU_010982_0_1_1"/>
<dbReference type="InParanoid" id="Q9VXH6"/>
<dbReference type="OMA" id="ASNCFWA"/>
<dbReference type="OrthoDB" id="424753at2759"/>
<dbReference type="PhylomeDB" id="Q9VXH6"/>
<dbReference type="BRENDA" id="3.4.22.B38">
    <property type="organism ID" value="1994"/>
</dbReference>
<dbReference type="SignaLink" id="Q9VXH6"/>
<dbReference type="BioGRID-ORCS" id="32597">
    <property type="hits" value="0 hits in 3 CRISPR screens"/>
</dbReference>
<dbReference type="GenomeRNAi" id="32597"/>
<dbReference type="PRO" id="PR:Q9VXH6"/>
<dbReference type="Proteomes" id="UP000000803">
    <property type="component" value="Chromosome X"/>
</dbReference>
<dbReference type="Bgee" id="FBgn0260450">
    <property type="expression patterns" value="Expressed in wing disc and 24 other cell types or tissues"/>
</dbReference>
<dbReference type="ExpressionAtlas" id="Q9VXH6">
    <property type="expression patterns" value="baseline and differential"/>
</dbReference>
<dbReference type="GO" id="GO:0005737">
    <property type="term" value="C:cytoplasm"/>
    <property type="evidence" value="ECO:0000314"/>
    <property type="project" value="UniProtKB"/>
</dbReference>
<dbReference type="GO" id="GO:0005509">
    <property type="term" value="F:calcium ion binding"/>
    <property type="evidence" value="ECO:0007669"/>
    <property type="project" value="InterPro"/>
</dbReference>
<dbReference type="CDD" id="cd00214">
    <property type="entry name" value="Calpain_III"/>
    <property type="match status" value="1"/>
</dbReference>
<dbReference type="CDD" id="cd00044">
    <property type="entry name" value="CysPc"/>
    <property type="match status" value="1"/>
</dbReference>
<dbReference type="FunFam" id="1.10.238.10:FF:000300">
    <property type="entry name" value="Calpain-C"/>
    <property type="match status" value="1"/>
</dbReference>
<dbReference type="FunFam" id="3.90.70.10:FF:000282">
    <property type="entry name" value="Calpain-C"/>
    <property type="match status" value="1"/>
</dbReference>
<dbReference type="FunFam" id="2.60.120.380:FF:000018">
    <property type="entry name" value="Calpain-c"/>
    <property type="match status" value="1"/>
</dbReference>
<dbReference type="Gene3D" id="2.60.120.380">
    <property type="match status" value="1"/>
</dbReference>
<dbReference type="Gene3D" id="3.90.70.10">
    <property type="entry name" value="Cysteine proteinases"/>
    <property type="match status" value="1"/>
</dbReference>
<dbReference type="Gene3D" id="1.10.238.10">
    <property type="entry name" value="EF-hand"/>
    <property type="match status" value="1"/>
</dbReference>
<dbReference type="InterPro" id="IPR033883">
    <property type="entry name" value="C2_III"/>
</dbReference>
<dbReference type="InterPro" id="IPR022684">
    <property type="entry name" value="Calpain_cysteine_protease"/>
</dbReference>
<dbReference type="InterPro" id="IPR022682">
    <property type="entry name" value="Calpain_domain_III"/>
</dbReference>
<dbReference type="InterPro" id="IPR022683">
    <property type="entry name" value="Calpain_III"/>
</dbReference>
<dbReference type="InterPro" id="IPR036213">
    <property type="entry name" value="Calpain_III_sf"/>
</dbReference>
<dbReference type="InterPro" id="IPR011992">
    <property type="entry name" value="EF-hand-dom_pair"/>
</dbReference>
<dbReference type="InterPro" id="IPR002048">
    <property type="entry name" value="EF_hand_dom"/>
</dbReference>
<dbReference type="InterPro" id="IPR038765">
    <property type="entry name" value="Papain-like_cys_pep_sf"/>
</dbReference>
<dbReference type="InterPro" id="IPR001300">
    <property type="entry name" value="Peptidase_C2_calpain_cat"/>
</dbReference>
<dbReference type="PANTHER" id="PTHR10183">
    <property type="entry name" value="CALPAIN"/>
    <property type="match status" value="1"/>
</dbReference>
<dbReference type="PANTHER" id="PTHR10183:SF394">
    <property type="entry name" value="CALPAIN-C"/>
    <property type="match status" value="1"/>
</dbReference>
<dbReference type="Pfam" id="PF01067">
    <property type="entry name" value="Calpain_III"/>
    <property type="match status" value="1"/>
</dbReference>
<dbReference type="Pfam" id="PF00648">
    <property type="entry name" value="Peptidase_C2"/>
    <property type="match status" value="1"/>
</dbReference>
<dbReference type="PRINTS" id="PR00704">
    <property type="entry name" value="CALPAIN"/>
</dbReference>
<dbReference type="SMART" id="SM00720">
    <property type="entry name" value="calpain_III"/>
    <property type="match status" value="1"/>
</dbReference>
<dbReference type="SMART" id="SM00230">
    <property type="entry name" value="CysPc"/>
    <property type="match status" value="1"/>
</dbReference>
<dbReference type="SUPFAM" id="SSF49758">
    <property type="entry name" value="Calpain large subunit, middle domain (domain III)"/>
    <property type="match status" value="1"/>
</dbReference>
<dbReference type="SUPFAM" id="SSF54001">
    <property type="entry name" value="Cysteine proteinases"/>
    <property type="match status" value="1"/>
</dbReference>
<dbReference type="SUPFAM" id="SSF47473">
    <property type="entry name" value="EF-hand"/>
    <property type="match status" value="1"/>
</dbReference>
<dbReference type="PROSITE" id="PS50203">
    <property type="entry name" value="CALPAIN_CAT"/>
    <property type="match status" value="1"/>
</dbReference>
<dbReference type="PROSITE" id="PS50222">
    <property type="entry name" value="EF_HAND_2"/>
    <property type="match status" value="1"/>
</dbReference>